<dbReference type="EMBL" id="CP000727">
    <property type="protein sequence ID" value="ABS38194.1"/>
    <property type="molecule type" value="Genomic_DNA"/>
</dbReference>
<dbReference type="EMBL" id="AM412317">
    <property type="protein sequence ID" value="CAL82249.1"/>
    <property type="molecule type" value="Genomic_DNA"/>
</dbReference>
<dbReference type="RefSeq" id="WP_011948418.1">
    <property type="nucleotide sequence ID" value="NC_009698.1"/>
</dbReference>
<dbReference type="RefSeq" id="YP_001253238.1">
    <property type="nucleotide sequence ID" value="NC_009495.1"/>
</dbReference>
<dbReference type="RefSeq" id="YP_001386630.1">
    <property type="nucleotide sequence ID" value="NC_009698.1"/>
</dbReference>
<dbReference type="SMR" id="A5HZP0"/>
<dbReference type="GeneID" id="5184952"/>
<dbReference type="KEGG" id="cbh:CLC_0751"/>
<dbReference type="KEGG" id="cbo:CBO0697"/>
<dbReference type="PATRIC" id="fig|413999.7.peg.693"/>
<dbReference type="HOGENOM" id="CLU_097408_2_2_9"/>
<dbReference type="PRO" id="PR:A5HZP0"/>
<dbReference type="Proteomes" id="UP000001986">
    <property type="component" value="Chromosome"/>
</dbReference>
<dbReference type="GO" id="GO:0005960">
    <property type="term" value="C:glycine cleavage complex"/>
    <property type="evidence" value="ECO:0007669"/>
    <property type="project" value="InterPro"/>
</dbReference>
<dbReference type="GO" id="GO:0019464">
    <property type="term" value="P:glycine decarboxylation via glycine cleavage system"/>
    <property type="evidence" value="ECO:0007669"/>
    <property type="project" value="UniProtKB-UniRule"/>
</dbReference>
<dbReference type="CDD" id="cd06848">
    <property type="entry name" value="GCS_H"/>
    <property type="match status" value="1"/>
</dbReference>
<dbReference type="Gene3D" id="2.40.50.100">
    <property type="match status" value="1"/>
</dbReference>
<dbReference type="HAMAP" id="MF_00272">
    <property type="entry name" value="GcvH"/>
    <property type="match status" value="1"/>
</dbReference>
<dbReference type="InterPro" id="IPR003016">
    <property type="entry name" value="2-oxoA_DH_lipoyl-BS"/>
</dbReference>
<dbReference type="InterPro" id="IPR000089">
    <property type="entry name" value="Biotin_lipoyl"/>
</dbReference>
<dbReference type="InterPro" id="IPR002930">
    <property type="entry name" value="GCV_H"/>
</dbReference>
<dbReference type="InterPro" id="IPR033753">
    <property type="entry name" value="GCV_H/Fam206"/>
</dbReference>
<dbReference type="InterPro" id="IPR017453">
    <property type="entry name" value="GCV_H_sub"/>
</dbReference>
<dbReference type="InterPro" id="IPR011053">
    <property type="entry name" value="Single_hybrid_motif"/>
</dbReference>
<dbReference type="NCBIfam" id="TIGR00527">
    <property type="entry name" value="gcvH"/>
    <property type="match status" value="1"/>
</dbReference>
<dbReference type="NCBIfam" id="NF002270">
    <property type="entry name" value="PRK01202.1"/>
    <property type="match status" value="1"/>
</dbReference>
<dbReference type="PANTHER" id="PTHR11715">
    <property type="entry name" value="GLYCINE CLEAVAGE SYSTEM H PROTEIN"/>
    <property type="match status" value="1"/>
</dbReference>
<dbReference type="PANTHER" id="PTHR11715:SF3">
    <property type="entry name" value="GLYCINE CLEAVAGE SYSTEM H PROTEIN-RELATED"/>
    <property type="match status" value="1"/>
</dbReference>
<dbReference type="Pfam" id="PF01597">
    <property type="entry name" value="GCV_H"/>
    <property type="match status" value="1"/>
</dbReference>
<dbReference type="SUPFAM" id="SSF51230">
    <property type="entry name" value="Single hybrid motif"/>
    <property type="match status" value="1"/>
</dbReference>
<dbReference type="PROSITE" id="PS50968">
    <property type="entry name" value="BIOTINYL_LIPOYL"/>
    <property type="match status" value="1"/>
</dbReference>
<dbReference type="PROSITE" id="PS00189">
    <property type="entry name" value="LIPOYL"/>
    <property type="match status" value="1"/>
</dbReference>
<sequence length="130" mass="14605">MKVLNNLLYTGDHEWVRVEDNKAYIGISDCAQRMLSDIVFVELPEVDDEIAKGETFATIESVKAASDSYMPVSGTIVEINEELEDNPAALNEDPYGSWIAAIEMSDKSELEELIKPEVYEKICEELDKEA</sequence>
<gene>
    <name evidence="1" type="primary">gcvH</name>
    <name type="ordered locus">CBO0697</name>
    <name type="ordered locus">CLC_0751</name>
</gene>
<organism>
    <name type="scientific">Clostridium botulinum (strain Hall / ATCC 3502 / NCTC 13319 / Type A)</name>
    <dbReference type="NCBI Taxonomy" id="441771"/>
    <lineage>
        <taxon>Bacteria</taxon>
        <taxon>Bacillati</taxon>
        <taxon>Bacillota</taxon>
        <taxon>Clostridia</taxon>
        <taxon>Eubacteriales</taxon>
        <taxon>Clostridiaceae</taxon>
        <taxon>Clostridium</taxon>
    </lineage>
</organism>
<comment type="function">
    <text evidence="1">The glycine cleavage system catalyzes the degradation of glycine. The H protein shuttles the methylamine group of glycine from the P protein to the T protein.</text>
</comment>
<comment type="cofactor">
    <cofactor evidence="1">
        <name>(R)-lipoate</name>
        <dbReference type="ChEBI" id="CHEBI:83088"/>
    </cofactor>
    <text evidence="1">Binds 1 lipoyl cofactor covalently.</text>
</comment>
<comment type="subunit">
    <text evidence="1">The glycine cleavage system is composed of four proteins: P, T, L and H.</text>
</comment>
<comment type="similarity">
    <text evidence="1">Belongs to the GcvH family.</text>
</comment>
<reference key="1">
    <citation type="journal article" date="2007" name="Genome Res.">
        <title>Genome sequence of a proteolytic (Group I) Clostridium botulinum strain Hall A and comparative analysis of the clostridial genomes.</title>
        <authorList>
            <person name="Sebaihia M."/>
            <person name="Peck M.W."/>
            <person name="Minton N.P."/>
            <person name="Thomson N.R."/>
            <person name="Holden M.T.G."/>
            <person name="Mitchell W.J."/>
            <person name="Carter A.T."/>
            <person name="Bentley S.D."/>
            <person name="Mason D.R."/>
            <person name="Crossman L."/>
            <person name="Paul C.J."/>
            <person name="Ivens A."/>
            <person name="Wells-Bennik M.H.J."/>
            <person name="Davis I.J."/>
            <person name="Cerdeno-Tarraga A.M."/>
            <person name="Churcher C."/>
            <person name="Quail M.A."/>
            <person name="Chillingworth T."/>
            <person name="Feltwell T."/>
            <person name="Fraser A."/>
            <person name="Goodhead I."/>
            <person name="Hance Z."/>
            <person name="Jagels K."/>
            <person name="Larke N."/>
            <person name="Maddison M."/>
            <person name="Moule S."/>
            <person name="Mungall K."/>
            <person name="Norbertczak H."/>
            <person name="Rabbinowitsch E."/>
            <person name="Sanders M."/>
            <person name="Simmonds M."/>
            <person name="White B."/>
            <person name="Whithead S."/>
            <person name="Parkhill J."/>
        </authorList>
    </citation>
    <scope>NUCLEOTIDE SEQUENCE [LARGE SCALE GENOMIC DNA]</scope>
    <source>
        <strain>Hall / ATCC 3502 / NCTC 13319 / Type A</strain>
    </source>
</reference>
<reference key="2">
    <citation type="journal article" date="2007" name="PLoS ONE">
        <title>Analysis of the neurotoxin complex genes in Clostridium botulinum A1-A4 and B1 strains: BoNT/A3, /Ba4 and /B1 clusters are located within plasmids.</title>
        <authorList>
            <person name="Smith T.J."/>
            <person name="Hill K.K."/>
            <person name="Foley B.T."/>
            <person name="Detter J.C."/>
            <person name="Munk A.C."/>
            <person name="Bruce D.C."/>
            <person name="Doggett N.A."/>
            <person name="Smith L.A."/>
            <person name="Marks J.D."/>
            <person name="Xie G."/>
            <person name="Brettin T.S."/>
        </authorList>
    </citation>
    <scope>NUCLEOTIDE SEQUENCE [LARGE SCALE GENOMIC DNA]</scope>
    <source>
        <strain>Hall / ATCC 3502 / NCTC 13319 / Type A</strain>
    </source>
</reference>
<proteinExistence type="inferred from homology"/>
<evidence type="ECO:0000255" key="1">
    <source>
        <dbReference type="HAMAP-Rule" id="MF_00272"/>
    </source>
</evidence>
<evidence type="ECO:0000255" key="2">
    <source>
        <dbReference type="PROSITE-ProRule" id="PRU01066"/>
    </source>
</evidence>
<protein>
    <recommendedName>
        <fullName evidence="1">Glycine cleavage system H protein</fullName>
    </recommendedName>
</protein>
<feature type="chain" id="PRO_1000022193" description="Glycine cleavage system H protein">
    <location>
        <begin position="1"/>
        <end position="130"/>
    </location>
</feature>
<feature type="domain" description="Lipoyl-binding" evidence="2">
    <location>
        <begin position="22"/>
        <end position="103"/>
    </location>
</feature>
<feature type="modified residue" description="N6-lipoyllysine" evidence="1">
    <location>
        <position position="63"/>
    </location>
</feature>
<name>GCSH_CLOBH</name>
<keyword id="KW-0450">Lipoyl</keyword>
<keyword id="KW-1185">Reference proteome</keyword>
<accession>A5HZP0</accession>
<accession>A7G1J1</accession>